<protein>
    <recommendedName>
        <fullName>Gonadotropin-releasing hormone receptor</fullName>
        <shortName>GnRH receptor</shortName>
        <shortName>GnRH-R</shortName>
    </recommendedName>
</protein>
<organism>
    <name type="scientific">Bos taurus</name>
    <name type="common">Bovine</name>
    <dbReference type="NCBI Taxonomy" id="9913"/>
    <lineage>
        <taxon>Eukaryota</taxon>
        <taxon>Metazoa</taxon>
        <taxon>Chordata</taxon>
        <taxon>Craniata</taxon>
        <taxon>Vertebrata</taxon>
        <taxon>Euteleostomi</taxon>
        <taxon>Mammalia</taxon>
        <taxon>Eutheria</taxon>
        <taxon>Laurasiatheria</taxon>
        <taxon>Artiodactyla</taxon>
        <taxon>Ruminantia</taxon>
        <taxon>Pecora</taxon>
        <taxon>Bovidae</taxon>
        <taxon>Bovinae</taxon>
        <taxon>Bos</taxon>
    </lineage>
</organism>
<gene>
    <name type="primary">GNRHR</name>
</gene>
<reference key="1">
    <citation type="journal article" date="1993" name="Domest. Anim. Endocrinol.">
        <title>Molecular cloning, sequencing, and characterizing the bovine receptor for gonadotropin releasing hormone (GnRH).</title>
        <authorList>
            <person name="Kakar S.S."/>
            <person name="Rahe C.H."/>
            <person name="Neill J.D."/>
        </authorList>
    </citation>
    <scope>NUCLEOTIDE SEQUENCE [MRNA]</scope>
</reference>
<reference key="2">
    <citation type="submission" date="1997-12" db="EMBL/GenBank/DDBJ databases">
        <title>Bovine gonadotropin releasing hormone receptor gene.</title>
        <authorList>
            <person name="Nelson S.E."/>
            <person name="Quirk C.E."/>
            <person name="Clay C.M."/>
        </authorList>
    </citation>
    <scope>NUCLEOTIDE SEQUENCE [GENOMIC DNA] OF 1-74</scope>
</reference>
<evidence type="ECO:0000255" key="1"/>
<evidence type="ECO:0000255" key="2">
    <source>
        <dbReference type="PROSITE-ProRule" id="PRU00521"/>
    </source>
</evidence>
<comment type="function">
    <text>Receptor for gonadotropin releasing hormone (GnRH) that mediates the action of GnRH to stimulate the secretion of the gonadotropic hormones luteinizing hormone (LH) and follicle-stimulating hormone (FSH). This receptor mediates its action by association with G-proteins that activate a phosphatidylinositol-calcium second messenger system.</text>
</comment>
<comment type="subcellular location">
    <subcellularLocation>
        <location>Cell membrane</location>
        <topology>Multi-pass membrane protein</topology>
    </subcellularLocation>
</comment>
<comment type="similarity">
    <text evidence="2">Belongs to the G-protein coupled receptor 1 family.</text>
</comment>
<keyword id="KW-1003">Cell membrane</keyword>
<keyword id="KW-1015">Disulfide bond</keyword>
<keyword id="KW-0297">G-protein coupled receptor</keyword>
<keyword id="KW-0325">Glycoprotein</keyword>
<keyword id="KW-0472">Membrane</keyword>
<keyword id="KW-0675">Receptor</keyword>
<keyword id="KW-1185">Reference proteome</keyword>
<keyword id="KW-0807">Transducer</keyword>
<keyword id="KW-0812">Transmembrane</keyword>
<keyword id="KW-1133">Transmembrane helix</keyword>
<dbReference type="EMBL" id="U00934">
    <property type="protein sequence ID" value="AAC48857.1"/>
    <property type="molecule type" value="mRNA"/>
</dbReference>
<dbReference type="EMBL" id="AF034950">
    <property type="protein sequence ID" value="AAB91470.1"/>
    <property type="molecule type" value="Genomic_DNA"/>
</dbReference>
<dbReference type="RefSeq" id="NP_803480.1">
    <property type="nucleotide sequence ID" value="NM_177514.2"/>
</dbReference>
<dbReference type="SMR" id="P32236"/>
<dbReference type="FunCoup" id="P32236">
    <property type="interactions" value="280"/>
</dbReference>
<dbReference type="STRING" id="9913.ENSBTAP00000000559"/>
<dbReference type="GlyCosmos" id="P32236">
    <property type="glycosylation" value="2 sites, No reported glycans"/>
</dbReference>
<dbReference type="GlyGen" id="P32236">
    <property type="glycosylation" value="2 sites"/>
</dbReference>
<dbReference type="PaxDb" id="9913-ENSBTAP00000000559"/>
<dbReference type="Ensembl" id="ENSBTAT00000000559.5">
    <property type="protein sequence ID" value="ENSBTAP00000000559.4"/>
    <property type="gene ID" value="ENSBTAG00000000438.5"/>
</dbReference>
<dbReference type="GeneID" id="281798"/>
<dbReference type="KEGG" id="bta:281798"/>
<dbReference type="CTD" id="2798"/>
<dbReference type="VEuPathDB" id="HostDB:ENSBTAG00000000438"/>
<dbReference type="VGNC" id="VGNC:29482">
    <property type="gene designation" value="GNRHR"/>
</dbReference>
<dbReference type="eggNOG" id="KOG3656">
    <property type="taxonomic scope" value="Eukaryota"/>
</dbReference>
<dbReference type="GeneTree" id="ENSGT01130000278263"/>
<dbReference type="HOGENOM" id="CLU_009579_15_2_1"/>
<dbReference type="InParanoid" id="P32236"/>
<dbReference type="OMA" id="LHQDPHE"/>
<dbReference type="OrthoDB" id="6022667at2759"/>
<dbReference type="TreeFam" id="TF106499"/>
<dbReference type="Reactome" id="R-BTA-375281">
    <property type="pathway name" value="Hormone ligand-binding receptors"/>
</dbReference>
<dbReference type="Reactome" id="R-BTA-416476">
    <property type="pathway name" value="G alpha (q) signalling events"/>
</dbReference>
<dbReference type="Proteomes" id="UP000009136">
    <property type="component" value="Chromosome 6"/>
</dbReference>
<dbReference type="Bgee" id="ENSBTAG00000000438">
    <property type="expression patterns" value="Expressed in pituitary gland and 10 other cell types or tissues"/>
</dbReference>
<dbReference type="GO" id="GO:0005886">
    <property type="term" value="C:plasma membrane"/>
    <property type="evidence" value="ECO:0000318"/>
    <property type="project" value="GO_Central"/>
</dbReference>
<dbReference type="GO" id="GO:0004968">
    <property type="term" value="F:gonadotropin-releasing hormone receptor activity"/>
    <property type="evidence" value="ECO:0000318"/>
    <property type="project" value="GO_Central"/>
</dbReference>
<dbReference type="GO" id="GO:0032870">
    <property type="term" value="P:cellular response to hormone stimulus"/>
    <property type="evidence" value="ECO:0000318"/>
    <property type="project" value="GO_Central"/>
</dbReference>
<dbReference type="GO" id="GO:0007186">
    <property type="term" value="P:G protein-coupled receptor signaling pathway"/>
    <property type="evidence" value="ECO:0000318"/>
    <property type="project" value="GO_Central"/>
</dbReference>
<dbReference type="FunFam" id="1.20.1070.10:FF:000203">
    <property type="entry name" value="gonadotropin-releasing hormone receptor"/>
    <property type="match status" value="1"/>
</dbReference>
<dbReference type="Gene3D" id="1.20.1070.10">
    <property type="entry name" value="Rhodopsin 7-helix transmembrane proteins"/>
    <property type="match status" value="1"/>
</dbReference>
<dbReference type="InterPro" id="IPR000276">
    <property type="entry name" value="GPCR_Rhodpsn"/>
</dbReference>
<dbReference type="InterPro" id="IPR017452">
    <property type="entry name" value="GPCR_Rhodpsn_7TM"/>
</dbReference>
<dbReference type="InterPro" id="IPR001658">
    <property type="entry name" value="GphnRH_fam_rcpt"/>
</dbReference>
<dbReference type="PANTHER" id="PTHR24241:SF22">
    <property type="entry name" value="GONADOTROPIN-RELEASING HORMONE RECEPTOR"/>
    <property type="match status" value="1"/>
</dbReference>
<dbReference type="PANTHER" id="PTHR24241">
    <property type="entry name" value="NEUROPEPTIDE RECEPTOR-RELATED G-PROTEIN COUPLED RECEPTOR"/>
    <property type="match status" value="1"/>
</dbReference>
<dbReference type="Pfam" id="PF00001">
    <property type="entry name" value="7tm_1"/>
    <property type="match status" value="1"/>
</dbReference>
<dbReference type="PRINTS" id="PR00529">
    <property type="entry name" value="GNADOTRPHINR"/>
</dbReference>
<dbReference type="PRINTS" id="PR00237">
    <property type="entry name" value="GPCRRHODOPSN"/>
</dbReference>
<dbReference type="SUPFAM" id="SSF81321">
    <property type="entry name" value="Family A G protein-coupled receptor-like"/>
    <property type="match status" value="1"/>
</dbReference>
<dbReference type="PROSITE" id="PS00237">
    <property type="entry name" value="G_PROTEIN_RECEP_F1_1"/>
    <property type="match status" value="1"/>
</dbReference>
<dbReference type="PROSITE" id="PS50262">
    <property type="entry name" value="G_PROTEIN_RECEP_F1_2"/>
    <property type="match status" value="1"/>
</dbReference>
<proteinExistence type="evidence at transcript level"/>
<feature type="chain" id="PRO_0000069483" description="Gonadotropin-releasing hormone receptor">
    <location>
        <begin position="1"/>
        <end position="328"/>
    </location>
</feature>
<feature type="topological domain" description="Extracellular" evidence="1">
    <location>
        <begin position="1"/>
        <end position="38"/>
    </location>
</feature>
<feature type="transmembrane region" description="Helical; Name=1" evidence="1">
    <location>
        <begin position="39"/>
        <end position="58"/>
    </location>
</feature>
<feature type="topological domain" description="Cytoplasmic" evidence="1">
    <location>
        <begin position="59"/>
        <end position="77"/>
    </location>
</feature>
<feature type="transmembrane region" description="Helical; Name=2" evidence="1">
    <location>
        <begin position="78"/>
        <end position="97"/>
    </location>
</feature>
<feature type="topological domain" description="Extracellular" evidence="1">
    <location>
        <begin position="98"/>
        <end position="115"/>
    </location>
</feature>
<feature type="transmembrane region" description="Helical; Name=3" evidence="1">
    <location>
        <begin position="116"/>
        <end position="137"/>
    </location>
</feature>
<feature type="topological domain" description="Cytoplasmic" evidence="1">
    <location>
        <begin position="138"/>
        <end position="164"/>
    </location>
</feature>
<feature type="transmembrane region" description="Helical; Name=4" evidence="1">
    <location>
        <begin position="165"/>
        <end position="184"/>
    </location>
</feature>
<feature type="topological domain" description="Extracellular" evidence="1">
    <location>
        <begin position="185"/>
        <end position="212"/>
    </location>
</feature>
<feature type="transmembrane region" description="Helical; Name=5" evidence="1">
    <location>
        <begin position="213"/>
        <end position="232"/>
    </location>
</feature>
<feature type="topological domain" description="Cytoplasmic" evidence="1">
    <location>
        <begin position="233"/>
        <end position="281"/>
    </location>
</feature>
<feature type="transmembrane region" description="Helical; Name=6" evidence="1">
    <location>
        <begin position="282"/>
        <end position="300"/>
    </location>
</feature>
<feature type="topological domain" description="Extracellular" evidence="1">
    <location>
        <begin position="301"/>
        <end position="306"/>
    </location>
</feature>
<feature type="transmembrane region" description="Helical; Name=7" evidence="1">
    <location>
        <begin position="307"/>
        <end position="326"/>
    </location>
</feature>
<feature type="topological domain" description="Cytoplasmic" evidence="1">
    <location>
        <begin position="327"/>
        <end position="328"/>
    </location>
</feature>
<feature type="glycosylation site" description="N-linked (GlcNAc...) asparagine" evidence="1">
    <location>
        <position position="18"/>
    </location>
</feature>
<feature type="glycosylation site" description="N-linked (GlcNAc...) asparagine" evidence="1">
    <location>
        <position position="102"/>
    </location>
</feature>
<feature type="disulfide bond" evidence="2">
    <location>
        <begin position="114"/>
        <end position="196"/>
    </location>
</feature>
<accession>P32236</accession>
<sequence length="328" mass="37741">MANSDSPEQNENHCSAINSSIPLTPGSLPTLTLSGKIRVTVTFFLFLLSTIFNTSFLLKLQNWTQRKEKRKKLSRMKLLLKHLTLANLLETLIVMPLDGMWNITVQWYAGELLCKVLSYLKLFSMYAPAFMMVVISLDRSLAITKPLAVKSNSKLGQFMIGLAWLLSSIFAGPQLYIFGMIHLADDSGQTEGFSQCVTHCSFPQWWHQAFYNFFTFSCLFIIPLLIMVICNAKIIFTLTRVLHQDPHKLQLNQSKNNIPRARLRTLKMTVAFATSFTVCWTPYYVLGIWYWFDPDMVNRVSDPVNHFFFLFAFLNPCFDPLIYGYFSL</sequence>
<name>GNRHR_BOVIN</name>